<protein>
    <recommendedName>
        <fullName evidence="1 12">sn-glycerol-3-phosphate import ATP-binding protein UgpC</fullName>
        <ecNumber evidence="1 4 14">7.6.2.10</ecNumber>
    </recommendedName>
</protein>
<organism>
    <name type="scientific">Escherichia coli (strain K12)</name>
    <dbReference type="NCBI Taxonomy" id="83333"/>
    <lineage>
        <taxon>Bacteria</taxon>
        <taxon>Pseudomonadati</taxon>
        <taxon>Pseudomonadota</taxon>
        <taxon>Gammaproteobacteria</taxon>
        <taxon>Enterobacterales</taxon>
        <taxon>Enterobacteriaceae</taxon>
        <taxon>Escherichia</taxon>
    </lineage>
</organism>
<proteinExistence type="evidence at protein level"/>
<evidence type="ECO:0000255" key="1">
    <source>
        <dbReference type="HAMAP-Rule" id="MF_01727"/>
    </source>
</evidence>
<evidence type="ECO:0000269" key="2">
    <source>
    </source>
</evidence>
<evidence type="ECO:0000269" key="3">
    <source>
    </source>
</evidence>
<evidence type="ECO:0000269" key="4">
    <source>
    </source>
</evidence>
<evidence type="ECO:0000269" key="5">
    <source>
    </source>
</evidence>
<evidence type="ECO:0000269" key="6">
    <source>
    </source>
</evidence>
<evidence type="ECO:0000269" key="7">
    <source>
    </source>
</evidence>
<evidence type="ECO:0000269" key="8">
    <source>
    </source>
</evidence>
<evidence type="ECO:0000269" key="9">
    <source>
    </source>
</evidence>
<evidence type="ECO:0000269" key="10">
    <source>
    </source>
</evidence>
<evidence type="ECO:0000303" key="11">
    <source>
    </source>
</evidence>
<evidence type="ECO:0000305" key="12"/>
<evidence type="ECO:0000305" key="13">
    <source>
    </source>
</evidence>
<evidence type="ECO:0000305" key="14">
    <source>
    </source>
</evidence>
<evidence type="ECO:0000305" key="15">
    <source>
    </source>
</evidence>
<keyword id="KW-0067">ATP-binding</keyword>
<keyword id="KW-0997">Cell inner membrane</keyword>
<keyword id="KW-1003">Cell membrane</keyword>
<keyword id="KW-0472">Membrane</keyword>
<keyword id="KW-0547">Nucleotide-binding</keyword>
<keyword id="KW-1185">Reference proteome</keyword>
<keyword id="KW-0762">Sugar transport</keyword>
<keyword id="KW-1278">Translocase</keyword>
<keyword id="KW-0813">Transport</keyword>
<accession>P10907</accession>
<accession>P76696</accession>
<accession>Q2M7B3</accession>
<reference key="1">
    <citation type="journal article" date="1988" name="Mol. Microbiol.">
        <title>Nucleotide sequence of the ugp genes of Escherichia coli K-12: homology to the maltose system.</title>
        <authorList>
            <person name="Overduin P."/>
            <person name="Boos W."/>
            <person name="Tommassen J."/>
        </authorList>
    </citation>
    <scope>NUCLEOTIDE SEQUENCE [GENOMIC DNA]</scope>
    <source>
        <strain>K12</strain>
    </source>
</reference>
<reference key="2">
    <citation type="journal article" date="1994" name="Nucleic Acids Res.">
        <title>Analysis of the Escherichia coli genome. V. DNA sequence of the region from 76.0 to 81.5 minutes.</title>
        <authorList>
            <person name="Sofia H.J."/>
            <person name="Burland V."/>
            <person name="Daniels D.L."/>
            <person name="Plunkett G. III"/>
            <person name="Blattner F.R."/>
        </authorList>
    </citation>
    <scope>NUCLEOTIDE SEQUENCE [LARGE SCALE GENOMIC DNA]</scope>
    <source>
        <strain>K12 / MG1655 / ATCC 47076</strain>
    </source>
</reference>
<reference key="3">
    <citation type="journal article" date="1997" name="Science">
        <title>The complete genome sequence of Escherichia coli K-12.</title>
        <authorList>
            <person name="Blattner F.R."/>
            <person name="Plunkett G. III"/>
            <person name="Bloch C.A."/>
            <person name="Perna N.T."/>
            <person name="Burland V."/>
            <person name="Riley M."/>
            <person name="Collado-Vides J."/>
            <person name="Glasner J.D."/>
            <person name="Rode C.K."/>
            <person name="Mayhew G.F."/>
            <person name="Gregor J."/>
            <person name="Davis N.W."/>
            <person name="Kirkpatrick H.A."/>
            <person name="Goeden M.A."/>
            <person name="Rose D.J."/>
            <person name="Mau B."/>
            <person name="Shao Y."/>
        </authorList>
    </citation>
    <scope>NUCLEOTIDE SEQUENCE [LARGE SCALE GENOMIC DNA]</scope>
    <source>
        <strain>K12 / MG1655 / ATCC 47076</strain>
    </source>
</reference>
<reference key="4">
    <citation type="journal article" date="2006" name="Mol. Syst. Biol.">
        <title>Highly accurate genome sequences of Escherichia coli K-12 strains MG1655 and W3110.</title>
        <authorList>
            <person name="Hayashi K."/>
            <person name="Morooka N."/>
            <person name="Yamamoto Y."/>
            <person name="Fujita K."/>
            <person name="Isono K."/>
            <person name="Choi S."/>
            <person name="Ohtsubo E."/>
            <person name="Baba T."/>
            <person name="Wanner B.L."/>
            <person name="Mori H."/>
            <person name="Horiuchi T."/>
        </authorList>
    </citation>
    <scope>NUCLEOTIDE SEQUENCE [LARGE SCALE GENOMIC DNA]</scope>
    <source>
        <strain>K12 / W3110 / ATCC 27325 / DSM 5911</strain>
    </source>
</reference>
<reference key="5">
    <citation type="journal article" date="1978" name="J. Bacteriol.">
        <title>A second transport system for sn-glycerol-3-phosphate in Escherichia coli.</title>
        <authorList>
            <person name="Argast M."/>
            <person name="Ludtke D."/>
            <person name="Silhavy T.J."/>
            <person name="Boos W."/>
        </authorList>
    </citation>
    <scope>FUNCTION IN SN-GLYCEROL-3-PHOSPHATE TRANSPORT</scope>
    <scope>ACTIVITY REGULATION</scope>
    <source>
        <strain>K12</strain>
    </source>
</reference>
<reference key="6">
    <citation type="journal article" date="1982" name="J. Bacteriol.">
        <title>Characteristics of a binding protein-dependent transport system for sn-glycerol-3-phosphate in Escherichia coli that is part of the pho regulon.</title>
        <authorList>
            <person name="Schweizer H."/>
            <person name="Argast M."/>
            <person name="Boos W."/>
        </authorList>
    </citation>
    <scope>FUNCTION IN SN-GLYCEROL-3-PHOSPHATE TRANSPORT</scope>
    <scope>INDUCTION BY PHOB</scope>
    <source>
        <strain>K12</strain>
    </source>
</reference>
<reference key="7">
    <citation type="journal article" date="1988" name="J. Bacteriol.">
        <title>Characteristics of a ugp-encoded and phoB-dependent glycerophosphoryl diester phosphodiesterase which is physically dependent on the ugp transport system of Escherichia coli.</title>
        <authorList>
            <person name="Brzoska P."/>
            <person name="Boos W."/>
        </authorList>
    </citation>
    <scope>FUNCTION IN SN-GLYCEROL-3-PHOSPHATE AND GLYCEROPHOSPHORYL DIESTERS TRANSPORT</scope>
    <scope>INDUCTION BY PHOB</scope>
    <source>
        <strain>K12</strain>
    </source>
</reference>
<reference key="8">
    <citation type="journal article" date="1991" name="J. Bacteriol.">
        <title>Dual regulation of the ugp operon by phosphate and carbon starvation at two interspaced promoters.</title>
        <authorList>
            <person name="Kasahara M."/>
            <person name="Makino K."/>
            <person name="Amemura M."/>
            <person name="Nakata A."/>
            <person name="Shinagawa H."/>
        </authorList>
    </citation>
    <scope>TRANSCRIPTIONAL REGULATION BY PHOB AND CRP</scope>
    <source>
        <strain>K12</strain>
    </source>
</reference>
<reference key="9">
    <citation type="journal article" date="1993" name="J. Bacteriol.">
        <title>Functional exchangeability of the ABC proteins of the periplasmic binding protein-dependent transport systems Ugp and Mal of Escherichia coli.</title>
        <authorList>
            <person name="Hekstra D."/>
            <person name="Tommassen J."/>
        </authorList>
    </citation>
    <scope>FUNCTIONAL EXCHANGEABILITY OF UGPC AND MALK</scope>
    <source>
        <strain>K12</strain>
    </source>
</reference>
<reference key="10">
    <citation type="journal article" date="1994" name="J. Bacteriol.">
        <title>The pho regulon-dependent Ugp uptake system for glycerol-3-phosphate in Escherichia coli is trans inhibited by Pi.</title>
        <authorList>
            <person name="Brzoska P."/>
            <person name="Rimmele M."/>
            <person name="Brzostek K."/>
            <person name="Boos W."/>
        </authorList>
    </citation>
    <scope>FUNCTION IN SN-GLYCEROL-3-PHOSPHATE</scope>
    <scope>INHIBITION BY INTERNAL PHOSPHATE</scope>
    <source>
        <strain>K12</strain>
    </source>
</reference>
<reference key="11">
    <citation type="journal article" date="1995" name="J. Bacteriol.">
        <title>Kinetic analysis by in vivo 31P nuclear magnetic resonance of internal Pi during the uptake of sn-glycerol-3-phosphate by the pho regulon-dependent Ugp system and the glp regulon-dependent GlpT system.</title>
        <authorList>
            <person name="Xavier K.B."/>
            <person name="Kossmann M."/>
            <person name="Santos H."/>
            <person name="Boos W."/>
        </authorList>
    </citation>
    <scope>INHIBITION BY INTERNAL PHOSPHATE</scope>
    <source>
        <strain>K12</strain>
    </source>
</reference>
<reference key="12">
    <citation type="journal article" date="1998" name="Methods Enzymol.">
        <title>Binding protein-dependent ABC transport system for glycerol 3-phosphate of Escherichia coli.</title>
        <authorList>
            <person name="Boos W."/>
        </authorList>
    </citation>
    <scope>REVIEW</scope>
</reference>
<reference key="13">
    <citation type="journal article" date="2009" name="J. Bacteriol.">
        <title>Uptake of glycerol-2-phosphate via the ugp-encoded transporter in Escherichia coli K-12.</title>
        <authorList>
            <person name="Yang K."/>
            <person name="Wang M."/>
            <person name="Metcalf W.W."/>
        </authorList>
    </citation>
    <scope>FUNCTION IN GLYCEROL-2-PHOSPHATE TRANSPORT</scope>
    <scope>DISRUPTION PHENOTYPE</scope>
</reference>
<reference key="14">
    <citation type="journal article" date="2012" name="Mol. Microbiol.">
        <title>Determinants of substrate specificity and biochemical properties of the sn-glycerol-3-phosphate ATP binding cassette transporter (UgpB-AEC2) of Escherichia coli.</title>
        <authorList>
            <person name="Wuttge S."/>
            <person name="Bommer M."/>
            <person name="Jaeger F."/>
            <person name="Martins B.M."/>
            <person name="Jacob S."/>
            <person name="Licht A."/>
            <person name="Scheffel F."/>
            <person name="Dobbek H."/>
            <person name="Schneider E."/>
        </authorList>
    </citation>
    <scope>FUNCTION</scope>
    <scope>CATALYTIC ACTIVITY</scope>
    <scope>ACTIVITY REGULATION</scope>
    <scope>SUBUNIT</scope>
</reference>
<comment type="function">
    <text evidence="2 4 5 6 7 9 12">Part of the ABC transporter complex UgpBAEC involved in sn-glycerol-3-phosphate (G3P) import (PubMed:23013274, PubMed:2842304, PubMed:363686, PubMed:7042685, PubMed:8282692). Responsible for energy coupling to the transport system (Probable). Can also transport glycerophosphoryl diesters, which are hydrolyzed to G3P and alcohol during transport (PubMed:2842304). The G3P moiety can be detected in the cytoplasm whereas the corresponding alcohol is usually found in the culture medium (PubMed:2842304). It was proposed by Yang et al that the complex could also transport glycerol-2-phosphate (G2P) in vivo, but it was shown later by Wuttge et al that UgpB does not bind G2P, questioning this transport activity (PubMed:19429609, PubMed:23013274). G2P might be converted in the periplasm to G3P before its transport (PubMed:23013274).</text>
</comment>
<comment type="catalytic activity">
    <reaction evidence="1 4 14">
        <text>sn-glycerol 3-phosphate(out) + ATP + H2O = sn-glycerol 3-phosphate(in) + ADP + phosphate + H(+)</text>
        <dbReference type="Rhea" id="RHEA:21668"/>
        <dbReference type="ChEBI" id="CHEBI:15377"/>
        <dbReference type="ChEBI" id="CHEBI:15378"/>
        <dbReference type="ChEBI" id="CHEBI:30616"/>
        <dbReference type="ChEBI" id="CHEBI:43474"/>
        <dbReference type="ChEBI" id="CHEBI:57597"/>
        <dbReference type="ChEBI" id="CHEBI:456216"/>
        <dbReference type="EC" id="7.6.2.10"/>
    </reaction>
</comment>
<comment type="catalytic activity">
    <reaction evidence="13">
        <text>glycerol 2-phosphate(out) + ATP + H2O = glycerol 2-phosphate(in) + ADP + phosphate + H(+)</text>
        <dbReference type="Rhea" id="RHEA:34759"/>
        <dbReference type="ChEBI" id="CHEBI:15377"/>
        <dbReference type="ChEBI" id="CHEBI:15378"/>
        <dbReference type="ChEBI" id="CHEBI:30616"/>
        <dbReference type="ChEBI" id="CHEBI:43474"/>
        <dbReference type="ChEBI" id="CHEBI:58083"/>
        <dbReference type="ChEBI" id="CHEBI:456216"/>
    </reaction>
</comment>
<comment type="activity regulation">
    <text evidence="4 6 8 9">ATPase activity is stimulated when UgpB is bound to G3P (PubMed:23013274). Transport is inhibited in vivo by increasing levels of internal phosphate (PubMed:7836304, PubMed:8282692). However, ATPase activity in proteoliposomes is neither inhibited by phosphate nor by the signal transducing protein PhoU or the phosphodiesterase UgpQ (PubMed:23013274). Activated by gluconate and inhibited by fumarate (PubMed:363686).</text>
</comment>
<comment type="subunit">
    <text evidence="1 4 15">The complex is composed of two ATP-binding proteins (UgpC), two transmembrane proteins (UgpA and UgpE) and a solute-binding protein (UgpB).</text>
</comment>
<comment type="subcellular location">
    <subcellularLocation>
        <location evidence="1 12">Cell inner membrane</location>
        <topology evidence="1 12">Peripheral membrane protein</topology>
    </subcellularLocation>
</comment>
<comment type="induction">
    <text evidence="3 5 7">Induced by phosphate starvation, via PhoB (PubMed:1987150, PubMed:2842304, PubMed:7042685). Also induced by carbon starvation, via the cAMP receptor protein (CRP) (PubMed:1987150).</text>
</comment>
<comment type="disruption phenotype">
    <text evidence="2">Mutant lacking this gene fails to grow on both glycerol-3-phosphate and glycerol-2-phosphate.</text>
</comment>
<comment type="miscellaneous">
    <text evidence="7">The Ugp system can supply G3P as a sole phosphate source but is unable to supply enough carbon for bacterial growth.</text>
</comment>
<comment type="miscellaneous">
    <text evidence="10">MalK and UgpC are functionally exchangeable, but UgpC does not complement the regulatory function of MalK in mal gene expression (PubMed:8407831). The hybrid transporters appear to be less efficient than the wild-type systems (PubMed:8407831).</text>
</comment>
<comment type="similarity">
    <text evidence="1 12">Belongs to the ABC transporter superfamily. sn-glycerol-3-phosphate importer (TC 3.A.1.1.3) family.</text>
</comment>
<comment type="sequence caution" evidence="12">
    <conflict type="erroneous initiation">
        <sequence resource="EMBL-CDS" id="AAB18425"/>
    </conflict>
    <text>Extended N-terminus.</text>
</comment>
<sequence length="356" mass="39524">MAGLKLQAVTKSWDGKTQVIKPLTLDVADGEFIVMVGPSGCGKSTLLRMVAGLERVTEGDIWINDQRVTEMEPKDRGIAMVFQNYALYPHMSVEENMAWGLKIRGMGKQQIAERVKEAARILELDGLLKRRPRELSGGQRQRVAMGRAIVRDPAVFLFDEPLSNLDAKLRVQMRLELQQLHRRLKTTSLYVTHDQVEAMTLAQRVMVMNGGVAEQIGTPVEVYEKPASLFVASFIGSPAMNLLTGRVNNEGTHFELDGGIELPLNGGYRQYAGRKMTLGIRPEHIALSSQAEGGVPMVMDTLEILGADNLAHGRWGEQKLVVRLAHQERPTAGSTLWLHLAENQLHLFDGETGQRV</sequence>
<dbReference type="EC" id="7.6.2.10" evidence="1 4 14"/>
<dbReference type="EMBL" id="X13141">
    <property type="protein sequence ID" value="CAA31534.1"/>
    <property type="molecule type" value="Genomic_DNA"/>
</dbReference>
<dbReference type="EMBL" id="U00039">
    <property type="protein sequence ID" value="AAB18425.1"/>
    <property type="status" value="ALT_INIT"/>
    <property type="molecule type" value="Genomic_DNA"/>
</dbReference>
<dbReference type="EMBL" id="U00096">
    <property type="protein sequence ID" value="AAC76475.2"/>
    <property type="molecule type" value="Genomic_DNA"/>
</dbReference>
<dbReference type="EMBL" id="AP009048">
    <property type="protein sequence ID" value="BAE77843.1"/>
    <property type="molecule type" value="Genomic_DNA"/>
</dbReference>
<dbReference type="PIR" id="S47669">
    <property type="entry name" value="QRECUC"/>
</dbReference>
<dbReference type="RefSeq" id="NP_417907.2">
    <property type="nucleotide sequence ID" value="NC_000913.3"/>
</dbReference>
<dbReference type="RefSeq" id="WP_000907792.1">
    <property type="nucleotide sequence ID" value="NZ_SSZK01000008.1"/>
</dbReference>
<dbReference type="SMR" id="P10907"/>
<dbReference type="BioGRID" id="4262493">
    <property type="interactions" value="220"/>
</dbReference>
<dbReference type="ComplexPortal" id="CPX-2150">
    <property type="entry name" value="sn-glycerol-3-phosphate ABC transporter complex"/>
</dbReference>
<dbReference type="DIP" id="DIP-11079N"/>
<dbReference type="FunCoup" id="P10907">
    <property type="interactions" value="271"/>
</dbReference>
<dbReference type="IntAct" id="P10907">
    <property type="interactions" value="8"/>
</dbReference>
<dbReference type="STRING" id="511145.b3450"/>
<dbReference type="TCDB" id="3.A.1.1.3">
    <property type="family name" value="the atp-binding cassette (abc) superfamily"/>
</dbReference>
<dbReference type="jPOST" id="P10907"/>
<dbReference type="PaxDb" id="511145-b3450"/>
<dbReference type="EnsemblBacteria" id="AAC76475">
    <property type="protein sequence ID" value="AAC76475"/>
    <property type="gene ID" value="b3450"/>
</dbReference>
<dbReference type="GeneID" id="947953"/>
<dbReference type="KEGG" id="ecj:JW3415"/>
<dbReference type="KEGG" id="eco:b3450"/>
<dbReference type="KEGG" id="ecoc:C3026_18685"/>
<dbReference type="PATRIC" id="fig|511145.12.peg.3547"/>
<dbReference type="EchoBASE" id="EB1041"/>
<dbReference type="eggNOG" id="COG3842">
    <property type="taxonomic scope" value="Bacteria"/>
</dbReference>
<dbReference type="HOGENOM" id="CLU_000604_1_1_6"/>
<dbReference type="InParanoid" id="P10907"/>
<dbReference type="OMA" id="DSPRNMY"/>
<dbReference type="OrthoDB" id="9802264at2"/>
<dbReference type="PhylomeDB" id="P10907"/>
<dbReference type="BioCyc" id="EcoCyc:UGPC-MONOMER"/>
<dbReference type="BioCyc" id="MetaCyc:UGPC-MONOMER"/>
<dbReference type="PRO" id="PR:P10907"/>
<dbReference type="Proteomes" id="UP000000625">
    <property type="component" value="Chromosome"/>
</dbReference>
<dbReference type="GO" id="GO:0055052">
    <property type="term" value="C:ATP-binding cassette (ABC) transporter complex, substrate-binding subunit-containing"/>
    <property type="evidence" value="ECO:0000314"/>
    <property type="project" value="EcoCyc"/>
</dbReference>
<dbReference type="GO" id="GO:1902517">
    <property type="term" value="C:glycerol-3-phosphate-transporting ATPase complex"/>
    <property type="evidence" value="ECO:0000353"/>
    <property type="project" value="ComplexPortal"/>
</dbReference>
<dbReference type="GO" id="GO:0016020">
    <property type="term" value="C:membrane"/>
    <property type="evidence" value="ECO:0000314"/>
    <property type="project" value="ComplexPortal"/>
</dbReference>
<dbReference type="GO" id="GO:0015430">
    <property type="term" value="F:ABC-type glycerol-3-phosphate transporter activity"/>
    <property type="evidence" value="ECO:0000314"/>
    <property type="project" value="EcoCyc"/>
</dbReference>
<dbReference type="GO" id="GO:0005524">
    <property type="term" value="F:ATP binding"/>
    <property type="evidence" value="ECO:0000255"/>
    <property type="project" value="EcoCyc"/>
</dbReference>
<dbReference type="GO" id="GO:0016887">
    <property type="term" value="F:ATP hydrolysis activity"/>
    <property type="evidence" value="ECO:0007669"/>
    <property type="project" value="InterPro"/>
</dbReference>
<dbReference type="GO" id="GO:0015169">
    <property type="term" value="F:glycerol-3-phosphate transmembrane transporter activity"/>
    <property type="evidence" value="ECO:0000314"/>
    <property type="project" value="EcoCyc"/>
</dbReference>
<dbReference type="GO" id="GO:0001406">
    <property type="term" value="F:glycerophosphodiester transmembrane transporter activity"/>
    <property type="evidence" value="ECO:0000314"/>
    <property type="project" value="EcoCyc"/>
</dbReference>
<dbReference type="GO" id="GO:0008643">
    <property type="term" value="P:carbohydrate transport"/>
    <property type="evidence" value="ECO:0007669"/>
    <property type="project" value="InterPro"/>
</dbReference>
<dbReference type="GO" id="GO:0015794">
    <property type="term" value="P:glycerol-3-phosphate transmembrane transport"/>
    <property type="evidence" value="ECO:0000314"/>
    <property type="project" value="ComplexPortal"/>
</dbReference>
<dbReference type="GO" id="GO:0001407">
    <property type="term" value="P:glycerophosphodiester transmembrane transport"/>
    <property type="evidence" value="ECO:0000314"/>
    <property type="project" value="EcoCyc"/>
</dbReference>
<dbReference type="CDD" id="cd03301">
    <property type="entry name" value="ABC_MalK_N"/>
    <property type="match status" value="1"/>
</dbReference>
<dbReference type="FunFam" id="3.40.50.300:FF:000042">
    <property type="entry name" value="Maltose/maltodextrin ABC transporter, ATP-binding protein"/>
    <property type="match status" value="1"/>
</dbReference>
<dbReference type="FunFam" id="2.40.50.100:FF:000032">
    <property type="entry name" value="sn-glycerol-3-phosphate import ATP-binding protein UgpC"/>
    <property type="match status" value="1"/>
</dbReference>
<dbReference type="FunFam" id="2.40.50.140:FF:000142">
    <property type="entry name" value="sn-glycerol-3-phosphate import ATP-binding protein UgpC"/>
    <property type="match status" value="1"/>
</dbReference>
<dbReference type="Gene3D" id="2.40.50.100">
    <property type="match status" value="1"/>
</dbReference>
<dbReference type="Gene3D" id="2.40.50.140">
    <property type="entry name" value="Nucleic acid-binding proteins"/>
    <property type="match status" value="1"/>
</dbReference>
<dbReference type="Gene3D" id="3.40.50.300">
    <property type="entry name" value="P-loop containing nucleotide triphosphate hydrolases"/>
    <property type="match status" value="1"/>
</dbReference>
<dbReference type="InterPro" id="IPR003593">
    <property type="entry name" value="AAA+_ATPase"/>
</dbReference>
<dbReference type="InterPro" id="IPR003439">
    <property type="entry name" value="ABC_transporter-like_ATP-bd"/>
</dbReference>
<dbReference type="InterPro" id="IPR017871">
    <property type="entry name" value="ABC_transporter-like_CS"/>
</dbReference>
<dbReference type="InterPro" id="IPR015855">
    <property type="entry name" value="ABC_transpr_MalK-like"/>
</dbReference>
<dbReference type="InterPro" id="IPR047641">
    <property type="entry name" value="ABC_transpr_MalK/UgpC-like"/>
</dbReference>
<dbReference type="InterPro" id="IPR008995">
    <property type="entry name" value="Mo/tungstate-bd_C_term_dom"/>
</dbReference>
<dbReference type="InterPro" id="IPR012340">
    <property type="entry name" value="NA-bd_OB-fold"/>
</dbReference>
<dbReference type="InterPro" id="IPR040582">
    <property type="entry name" value="OB_MalK-like"/>
</dbReference>
<dbReference type="InterPro" id="IPR027417">
    <property type="entry name" value="P-loop_NTPase"/>
</dbReference>
<dbReference type="NCBIfam" id="NF008653">
    <property type="entry name" value="PRK11650.1"/>
    <property type="match status" value="1"/>
</dbReference>
<dbReference type="PANTHER" id="PTHR43875">
    <property type="entry name" value="MALTODEXTRIN IMPORT ATP-BINDING PROTEIN MSMX"/>
    <property type="match status" value="1"/>
</dbReference>
<dbReference type="PANTHER" id="PTHR43875:SF12">
    <property type="entry name" value="SN-GLYCEROL-3-PHOSPHATE IMPORT ATP-BINDING PROTEIN UGPC"/>
    <property type="match status" value="1"/>
</dbReference>
<dbReference type="Pfam" id="PF00005">
    <property type="entry name" value="ABC_tran"/>
    <property type="match status" value="1"/>
</dbReference>
<dbReference type="Pfam" id="PF17912">
    <property type="entry name" value="OB_MalK"/>
    <property type="match status" value="1"/>
</dbReference>
<dbReference type="SMART" id="SM00382">
    <property type="entry name" value="AAA"/>
    <property type="match status" value="1"/>
</dbReference>
<dbReference type="SUPFAM" id="SSF50331">
    <property type="entry name" value="MOP-like"/>
    <property type="match status" value="1"/>
</dbReference>
<dbReference type="SUPFAM" id="SSF52540">
    <property type="entry name" value="P-loop containing nucleoside triphosphate hydrolases"/>
    <property type="match status" value="1"/>
</dbReference>
<dbReference type="PROSITE" id="PS00211">
    <property type="entry name" value="ABC_TRANSPORTER_1"/>
    <property type="match status" value="1"/>
</dbReference>
<dbReference type="PROSITE" id="PS50893">
    <property type="entry name" value="ABC_TRANSPORTER_2"/>
    <property type="match status" value="1"/>
</dbReference>
<dbReference type="PROSITE" id="PS51315">
    <property type="entry name" value="UGPC"/>
    <property type="match status" value="1"/>
</dbReference>
<gene>
    <name evidence="1 11" type="primary">ugpC</name>
    <name type="ordered locus">b3450</name>
    <name type="ordered locus">JW3415</name>
</gene>
<name>UGPC_ECOLI</name>
<feature type="chain" id="PRO_0000093026" description="sn-glycerol-3-phosphate import ATP-binding protein UgpC">
    <location>
        <begin position="1"/>
        <end position="356"/>
    </location>
</feature>
<feature type="domain" description="ABC transporter" evidence="1">
    <location>
        <begin position="4"/>
        <end position="235"/>
    </location>
</feature>
<feature type="binding site" evidence="1">
    <location>
        <begin position="37"/>
        <end position="44"/>
    </location>
    <ligand>
        <name>ATP</name>
        <dbReference type="ChEBI" id="CHEBI:30616"/>
    </ligand>
</feature>